<protein>
    <recommendedName>
        <fullName>HEAT repeat-containing protein 5A</fullName>
    </recommendedName>
</protein>
<accession>Q5PRF0</accession>
<accession>E9QPI0</accession>
<accession>Q3TT84</accession>
<accession>Q3V311</accession>
<accession>Q6P4S9</accession>
<accession>Q80TF2</accession>
<accession>Q8C8F7</accession>
<proteinExistence type="evidence at protein level"/>
<sequence>MELAHSLLLNEEASNQLGAVQKAEFIFEWLRYLEKLLLATNREDVREKQKTLVGQLLSLLNSSPGPPTRKLLAQDLAILYSVGDTVSVYETIDKCNDLIRSKDDSPSYLPTKLAAVVCLGSLYKKLGRILANGFTDTVVNILKAMKSAESQGRYEIMLSLQSILTGLGAAAAPCHRDVYKAARSCLTDRSMAVRCAAAKCLLELQNEAIFMWSTDVDSVATLCFKSFEGSNYDVRISVSKLLGTVLAKAVTAKHPGAGSKQSARRVSLEEVLELLGAGFLRGSSGFLRASGDMLKGNSSVSRDVRVGVTQAYVVFVSTLGGAWLEKNLAAFLSHILSLVSQSNPKATQTQIDAVCCRRCVSFILRATLGGLLGEKAQIAAAKEICQAVWRLKKVMDAALSDGNVETRLSSTDVAASQHVLVCALQELGNLIHNLGTTAAPLLQDSSTGLLDSVISVVLHPSISVRLAAAWCLHCIAVALPSYLTPLLDRCLERLAILKSSPEAVTGFSSAVAALLGSVTHCPLGIPHGKGKIIMTIAEDLLCSAAQNSRLSLQRTQAGWLLVAALMTLGPAVVSHHLTRVLLLWKCVFPASPRDLETEKSRGDSFTWQVTLEGRAGALCAVKSFISHCGDLLTEEVIQRLLPPLPCAVDLLTQLSSILKTYGSSLKTPSIVYRQRLYELLILLPPETYKGNLCVILKELAAELTAPDTQAAASTCLLPALCHPDDLLILSPLLQETDHRFIEEQLLLGNGVACGSLEYDPYSIYEKDVEGDSVPKPLPPALSVISSASKLFGVVCATVDEAQRVLILEQLLNSIKHTKGARQQTVQLHVVSAISNLLKYVAGSKQSLGPEVRRLVLTLVLGALESPTPLLRCAASEAWARLAQVADDGAFTAGLAQLSFDKLKSARDVVTRTGHSLALGSLHRYLGGIGPQHLSSCIGVLYTLSQDSTSPDVQTWALHSLSLTIDSAGALYHVHVESTLSLIVMLLLNVPPTHAQVHQSLGRCLNALITTLGPELQGSNTSVSALRTSCLLGCAVMQDHPGCLVQAQAISCLQQLHMFAPRHVNLSSLVSCLCVNLCSPYLLLRRAVLACLRQLVQREAAEVSEHAIMLARDGRDAAADANLREVGLEGALLALLDRETDESLCQDIRETLHHMLTSMAVGKLTLWLKLCKDVLAASADFTAVTCVDTMQEEEGDRGDDASVLTRGDDKPHPFSNPRWATRVFAADCVCRIINQCENANRAHFDIALAQEMKKRDSRNDFLVLHLADLIRMAFMAATDHSDQLRLSGLDTLLVVIRRFADIAEPEFPGHVILEQYQANVGAALRPAFTSETPPDITAKACQVCSAWIASGVVSDLSDLRRVHQLLVSSLTKIQAGKEALSQLYNESASTMEILAVLRAWAEVYIIAVQRHKNHKQALKTTVNSEDSMRNGSSSAAGLLDLVCTDLATLSKLWLAALQDFALLTLPAEFASQLPTEGGAFYTAETSKSAKLHYHDSWALILHAAALWLTSTGFADPDEGGANLSRPVTPTSMCQGSSSSGAAVKSPEDVYTDRFHLILGISVEFLCSLRSDASLESIMACLRALQALLDVPWPRWRIGSDQDLGIELLNVLHRVILTRESPAIQLASLEVVRQIICAAQEHVKEKRRSAEVDDGASEKETLPEFGEGKDTGGLVPGKSLVFATLELCVCILVRQLPELNPKLAGSPGGKASKPKTLLEEGSRLVAAALAILAELPAVCSPEGSISILPTVLYLTIGVLRETAVKLPGGQLSCTVTASLQTLKGILTSPMARAEKSHEAWTSLLQSALATVLDCWSPVDGAQEPDEVSLLTAVTVFILSTSPEVTTVPCLQNRCIEKFKAALESKDSVVQMKTCQLLHSIFQYPKPAVSYPYIYSLASSIVEKLQDIARRKPEDATELQLCQEGIKLLEALVAIAEEEHRAQLVACLLPILISFLLDENALGSATSVTRSLHDFALHSLMQIGPRYSSVFKRVMASSPALKARLEAAVKGNQESVRVDPPSKHAKNLARNSSIQLKTNFL</sequence>
<gene>
    <name type="primary">Heatr5a</name>
    <name type="synonym">Kiaa1316</name>
</gene>
<comment type="alternative products">
    <event type="alternative splicing"/>
    <isoform>
        <id>Q5PRF0-1</id>
        <name>1</name>
        <sequence type="displayed"/>
    </isoform>
    <isoform>
        <id>Q5PRF0-2</id>
        <name>2</name>
        <sequence type="described" ref="VSP_029687"/>
    </isoform>
</comment>
<comment type="similarity">
    <text evidence="4">Belongs to the HEATR5 family.</text>
</comment>
<comment type="sequence caution" evidence="4">
    <conflict type="frameshift">
        <sequence resource="EMBL-CDS" id="BAC32998"/>
    </conflict>
</comment>
<comment type="sequence caution" evidence="4">
    <conflict type="frameshift">
        <sequence resource="EMBL-CDS" id="BAE43352"/>
    </conflict>
</comment>
<keyword id="KW-0025">Alternative splicing</keyword>
<keyword id="KW-0597">Phosphoprotein</keyword>
<keyword id="KW-1185">Reference proteome</keyword>
<keyword id="KW-0677">Repeat</keyword>
<name>HTR5A_MOUSE</name>
<reference key="1">
    <citation type="journal article" date="2005" name="Science">
        <title>The transcriptional landscape of the mammalian genome.</title>
        <authorList>
            <person name="Carninci P."/>
            <person name="Kasukawa T."/>
            <person name="Katayama S."/>
            <person name="Gough J."/>
            <person name="Frith M.C."/>
            <person name="Maeda N."/>
            <person name="Oyama R."/>
            <person name="Ravasi T."/>
            <person name="Lenhard B."/>
            <person name="Wells C."/>
            <person name="Kodzius R."/>
            <person name="Shimokawa K."/>
            <person name="Bajic V.B."/>
            <person name="Brenner S.E."/>
            <person name="Batalov S."/>
            <person name="Forrest A.R."/>
            <person name="Zavolan M."/>
            <person name="Davis M.J."/>
            <person name="Wilming L.G."/>
            <person name="Aidinis V."/>
            <person name="Allen J.E."/>
            <person name="Ambesi-Impiombato A."/>
            <person name="Apweiler R."/>
            <person name="Aturaliya R.N."/>
            <person name="Bailey T.L."/>
            <person name="Bansal M."/>
            <person name="Baxter L."/>
            <person name="Beisel K.W."/>
            <person name="Bersano T."/>
            <person name="Bono H."/>
            <person name="Chalk A.M."/>
            <person name="Chiu K.P."/>
            <person name="Choudhary V."/>
            <person name="Christoffels A."/>
            <person name="Clutterbuck D.R."/>
            <person name="Crowe M.L."/>
            <person name="Dalla E."/>
            <person name="Dalrymple B.P."/>
            <person name="de Bono B."/>
            <person name="Della Gatta G."/>
            <person name="di Bernardo D."/>
            <person name="Down T."/>
            <person name="Engstrom P."/>
            <person name="Fagiolini M."/>
            <person name="Faulkner G."/>
            <person name="Fletcher C.F."/>
            <person name="Fukushima T."/>
            <person name="Furuno M."/>
            <person name="Futaki S."/>
            <person name="Gariboldi M."/>
            <person name="Georgii-Hemming P."/>
            <person name="Gingeras T.R."/>
            <person name="Gojobori T."/>
            <person name="Green R.E."/>
            <person name="Gustincich S."/>
            <person name="Harbers M."/>
            <person name="Hayashi Y."/>
            <person name="Hensch T.K."/>
            <person name="Hirokawa N."/>
            <person name="Hill D."/>
            <person name="Huminiecki L."/>
            <person name="Iacono M."/>
            <person name="Ikeo K."/>
            <person name="Iwama A."/>
            <person name="Ishikawa T."/>
            <person name="Jakt M."/>
            <person name="Kanapin A."/>
            <person name="Katoh M."/>
            <person name="Kawasawa Y."/>
            <person name="Kelso J."/>
            <person name="Kitamura H."/>
            <person name="Kitano H."/>
            <person name="Kollias G."/>
            <person name="Krishnan S.P."/>
            <person name="Kruger A."/>
            <person name="Kummerfeld S.K."/>
            <person name="Kurochkin I.V."/>
            <person name="Lareau L.F."/>
            <person name="Lazarevic D."/>
            <person name="Lipovich L."/>
            <person name="Liu J."/>
            <person name="Liuni S."/>
            <person name="McWilliam S."/>
            <person name="Madan Babu M."/>
            <person name="Madera M."/>
            <person name="Marchionni L."/>
            <person name="Matsuda H."/>
            <person name="Matsuzawa S."/>
            <person name="Miki H."/>
            <person name="Mignone F."/>
            <person name="Miyake S."/>
            <person name="Morris K."/>
            <person name="Mottagui-Tabar S."/>
            <person name="Mulder N."/>
            <person name="Nakano N."/>
            <person name="Nakauchi H."/>
            <person name="Ng P."/>
            <person name="Nilsson R."/>
            <person name="Nishiguchi S."/>
            <person name="Nishikawa S."/>
            <person name="Nori F."/>
            <person name="Ohara O."/>
            <person name="Okazaki Y."/>
            <person name="Orlando V."/>
            <person name="Pang K.C."/>
            <person name="Pavan W.J."/>
            <person name="Pavesi G."/>
            <person name="Pesole G."/>
            <person name="Petrovsky N."/>
            <person name="Piazza S."/>
            <person name="Reed J."/>
            <person name="Reid J.F."/>
            <person name="Ring B.Z."/>
            <person name="Ringwald M."/>
            <person name="Rost B."/>
            <person name="Ruan Y."/>
            <person name="Salzberg S.L."/>
            <person name="Sandelin A."/>
            <person name="Schneider C."/>
            <person name="Schoenbach C."/>
            <person name="Sekiguchi K."/>
            <person name="Semple C.A."/>
            <person name="Seno S."/>
            <person name="Sessa L."/>
            <person name="Sheng Y."/>
            <person name="Shibata Y."/>
            <person name="Shimada H."/>
            <person name="Shimada K."/>
            <person name="Silva D."/>
            <person name="Sinclair B."/>
            <person name="Sperling S."/>
            <person name="Stupka E."/>
            <person name="Sugiura K."/>
            <person name="Sultana R."/>
            <person name="Takenaka Y."/>
            <person name="Taki K."/>
            <person name="Tammoja K."/>
            <person name="Tan S.L."/>
            <person name="Tang S."/>
            <person name="Taylor M.S."/>
            <person name="Tegner J."/>
            <person name="Teichmann S.A."/>
            <person name="Ueda H.R."/>
            <person name="van Nimwegen E."/>
            <person name="Verardo R."/>
            <person name="Wei C.L."/>
            <person name="Yagi K."/>
            <person name="Yamanishi H."/>
            <person name="Zabarovsky E."/>
            <person name="Zhu S."/>
            <person name="Zimmer A."/>
            <person name="Hide W."/>
            <person name="Bult C."/>
            <person name="Grimmond S.M."/>
            <person name="Teasdale R.D."/>
            <person name="Liu E.T."/>
            <person name="Brusic V."/>
            <person name="Quackenbush J."/>
            <person name="Wahlestedt C."/>
            <person name="Mattick J.S."/>
            <person name="Hume D.A."/>
            <person name="Kai C."/>
            <person name="Sasaki D."/>
            <person name="Tomaru Y."/>
            <person name="Fukuda S."/>
            <person name="Kanamori-Katayama M."/>
            <person name="Suzuki M."/>
            <person name="Aoki J."/>
            <person name="Arakawa T."/>
            <person name="Iida J."/>
            <person name="Imamura K."/>
            <person name="Itoh M."/>
            <person name="Kato T."/>
            <person name="Kawaji H."/>
            <person name="Kawagashira N."/>
            <person name="Kawashima T."/>
            <person name="Kojima M."/>
            <person name="Kondo S."/>
            <person name="Konno H."/>
            <person name="Nakano K."/>
            <person name="Ninomiya N."/>
            <person name="Nishio T."/>
            <person name="Okada M."/>
            <person name="Plessy C."/>
            <person name="Shibata K."/>
            <person name="Shiraki T."/>
            <person name="Suzuki S."/>
            <person name="Tagami M."/>
            <person name="Waki K."/>
            <person name="Watahiki A."/>
            <person name="Okamura-Oho Y."/>
            <person name="Suzuki H."/>
            <person name="Kawai J."/>
            <person name="Hayashizaki Y."/>
        </authorList>
    </citation>
    <scope>NUCLEOTIDE SEQUENCE [LARGE SCALE MRNA] (ISOFORM 2)</scope>
    <scope>NUCLEOTIDE SEQUENCE [LARGE SCALE MRNA] OF 1-1248 AND 1480-2038 (ISOFORM 1)</scope>
    <source>
        <strain>C57BL/6J</strain>
        <tissue>Cerebellum</tissue>
        <tissue>Embryonic head</tissue>
    </source>
</reference>
<reference key="2">
    <citation type="journal article" date="2009" name="PLoS Biol.">
        <title>Lineage-specific biology revealed by a finished genome assembly of the mouse.</title>
        <authorList>
            <person name="Church D.M."/>
            <person name="Goodstadt L."/>
            <person name="Hillier L.W."/>
            <person name="Zody M.C."/>
            <person name="Goldstein S."/>
            <person name="She X."/>
            <person name="Bult C.J."/>
            <person name="Agarwala R."/>
            <person name="Cherry J.L."/>
            <person name="DiCuccio M."/>
            <person name="Hlavina W."/>
            <person name="Kapustin Y."/>
            <person name="Meric P."/>
            <person name="Maglott D."/>
            <person name="Birtle Z."/>
            <person name="Marques A.C."/>
            <person name="Graves T."/>
            <person name="Zhou S."/>
            <person name="Teague B."/>
            <person name="Potamousis K."/>
            <person name="Churas C."/>
            <person name="Place M."/>
            <person name="Herschleb J."/>
            <person name="Runnheim R."/>
            <person name="Forrest D."/>
            <person name="Amos-Landgraf J."/>
            <person name="Schwartz D.C."/>
            <person name="Cheng Z."/>
            <person name="Lindblad-Toh K."/>
            <person name="Eichler E.E."/>
            <person name="Ponting C.P."/>
        </authorList>
    </citation>
    <scope>NUCLEOTIDE SEQUENCE [LARGE SCALE GENOMIC DNA]</scope>
    <source>
        <strain>C57BL/6J</strain>
    </source>
</reference>
<reference key="3">
    <citation type="journal article" date="2004" name="Genome Res.">
        <title>The status, quality, and expansion of the NIH full-length cDNA project: the Mammalian Gene Collection (MGC).</title>
        <authorList>
            <consortium name="The MGC Project Team"/>
        </authorList>
    </citation>
    <scope>NUCLEOTIDE SEQUENCE [LARGE SCALE MRNA] (ISOFORM 1)</scope>
    <source>
        <strain>C57BL/6J</strain>
        <tissue>Brain</tissue>
    </source>
</reference>
<reference key="4">
    <citation type="journal article" date="2003" name="DNA Res.">
        <title>Prediction of the coding sequences of mouse homologues of KIAA gene: II. The complete nucleotide sequences of 400 mouse KIAA-homologous cDNAs identified by screening of terminal sequences of cDNA clones randomly sampled from size-fractionated libraries.</title>
        <authorList>
            <person name="Okazaki N."/>
            <person name="Kikuno R."/>
            <person name="Ohara R."/>
            <person name="Inamoto S."/>
            <person name="Aizawa H."/>
            <person name="Yuasa S."/>
            <person name="Nakajima D."/>
            <person name="Nagase T."/>
            <person name="Ohara O."/>
            <person name="Koga H."/>
        </authorList>
    </citation>
    <scope>NUCLEOTIDE SEQUENCE [LARGE SCALE MRNA] OF 598-2038 (ISOFORM 1)</scope>
    <source>
        <tissue>Brain</tissue>
    </source>
</reference>
<reference key="5">
    <citation type="journal article" date="2010" name="Cell">
        <title>A tissue-specific atlas of mouse protein phosphorylation and expression.</title>
        <authorList>
            <person name="Huttlin E.L."/>
            <person name="Jedrychowski M.P."/>
            <person name="Elias J.E."/>
            <person name="Goswami T."/>
            <person name="Rad R."/>
            <person name="Beausoleil S.A."/>
            <person name="Villen J."/>
            <person name="Haas W."/>
            <person name="Sowa M.E."/>
            <person name="Gygi S.P."/>
        </authorList>
    </citation>
    <scope>IDENTIFICATION BY MASS SPECTROMETRY [LARGE SCALE ANALYSIS]</scope>
    <source>
        <tissue>Brown adipose tissue</tissue>
        <tissue>Heart</tissue>
        <tissue>Kidney</tissue>
        <tissue>Liver</tissue>
        <tissue>Lung</tissue>
        <tissue>Spleen</tissue>
        <tissue>Testis</tissue>
    </source>
</reference>
<evidence type="ECO:0000250" key="1">
    <source>
        <dbReference type="UniProtKB" id="Q86XA9"/>
    </source>
</evidence>
<evidence type="ECO:0000256" key="2">
    <source>
        <dbReference type="SAM" id="MobiDB-lite"/>
    </source>
</evidence>
<evidence type="ECO:0000303" key="3">
    <source>
    </source>
</evidence>
<evidence type="ECO:0000305" key="4"/>
<organism>
    <name type="scientific">Mus musculus</name>
    <name type="common">Mouse</name>
    <dbReference type="NCBI Taxonomy" id="10090"/>
    <lineage>
        <taxon>Eukaryota</taxon>
        <taxon>Metazoa</taxon>
        <taxon>Chordata</taxon>
        <taxon>Craniata</taxon>
        <taxon>Vertebrata</taxon>
        <taxon>Euteleostomi</taxon>
        <taxon>Mammalia</taxon>
        <taxon>Eutheria</taxon>
        <taxon>Euarchontoglires</taxon>
        <taxon>Glires</taxon>
        <taxon>Rodentia</taxon>
        <taxon>Myomorpha</taxon>
        <taxon>Muroidea</taxon>
        <taxon>Muridae</taxon>
        <taxon>Murinae</taxon>
        <taxon>Mus</taxon>
        <taxon>Mus</taxon>
    </lineage>
</organism>
<feature type="chain" id="PRO_0000311991" description="HEAT repeat-containing protein 5A">
    <location>
        <begin position="1"/>
        <end position="2038"/>
    </location>
</feature>
<feature type="repeat" description="HEAT 1">
    <location>
        <begin position="850"/>
        <end position="887"/>
    </location>
</feature>
<feature type="repeat" description="HEAT 2">
    <location>
        <begin position="1082"/>
        <end position="1119"/>
    </location>
</feature>
<feature type="region of interest" description="Disordered" evidence="2">
    <location>
        <begin position="1646"/>
        <end position="1668"/>
    </location>
</feature>
<feature type="modified residue" description="Phosphoserine" evidence="1">
    <location>
        <position position="1647"/>
    </location>
</feature>
<feature type="splice variant" id="VSP_029687" description="In isoform 2." evidence="3">
    <location>
        <begin position="654"/>
        <end position="2038"/>
    </location>
</feature>
<feature type="sequence conflict" description="In Ref. 1; BAC32998." evidence="4" ref="1">
    <original>L</original>
    <variation>V</variation>
    <location>
        <position position="57"/>
    </location>
</feature>
<feature type="sequence conflict" description="In Ref. 1; BAE43352." evidence="4" ref="1">
    <original>E</original>
    <variation>G</variation>
    <location>
        <position position="686"/>
    </location>
</feature>
<feature type="sequence conflict" description="In Ref. 1; BAE43352." evidence="4" ref="1">
    <original>D</original>
    <variation>N</variation>
    <location>
        <position position="737"/>
    </location>
</feature>
<feature type="sequence conflict" description="In Ref. 1; BAE43352." evidence="4" ref="1">
    <original>S</original>
    <variation>G</variation>
    <location>
        <position position="1070"/>
    </location>
</feature>
<feature type="sequence conflict" description="In Ref. 3; AAH86656." evidence="4" ref="3">
    <original>E</original>
    <variation>G</variation>
    <location>
        <position position="1643"/>
    </location>
</feature>
<dbReference type="EMBL" id="AK047221">
    <property type="protein sequence ID" value="BAC32998.1"/>
    <property type="status" value="ALT_FRAME"/>
    <property type="molecule type" value="mRNA"/>
</dbReference>
<dbReference type="EMBL" id="AK053055">
    <property type="protein sequence ID" value="BAE43352.1"/>
    <property type="status" value="ALT_FRAME"/>
    <property type="molecule type" value="mRNA"/>
</dbReference>
<dbReference type="EMBL" id="AK161523">
    <property type="protein sequence ID" value="BAE36441.1"/>
    <property type="molecule type" value="mRNA"/>
</dbReference>
<dbReference type="EMBL" id="AC157213">
    <property type="status" value="NOT_ANNOTATED_CDS"/>
    <property type="molecule type" value="Genomic_DNA"/>
</dbReference>
<dbReference type="EMBL" id="AC161114">
    <property type="status" value="NOT_ANNOTATED_CDS"/>
    <property type="molecule type" value="Genomic_DNA"/>
</dbReference>
<dbReference type="EMBL" id="BC063265">
    <property type="protein sequence ID" value="AAH63265.1"/>
    <property type="molecule type" value="mRNA"/>
</dbReference>
<dbReference type="EMBL" id="BC086656">
    <property type="protein sequence ID" value="AAH86656.1"/>
    <property type="molecule type" value="mRNA"/>
</dbReference>
<dbReference type="EMBL" id="AK122493">
    <property type="protein sequence ID" value="BAC65775.1"/>
    <property type="molecule type" value="mRNA"/>
</dbReference>
<dbReference type="CCDS" id="CCDS25902.1">
    <molecule id="Q5PRF0-1"/>
</dbReference>
<dbReference type="RefSeq" id="NP_796145.2">
    <molecule id="Q5PRF0-1"/>
    <property type="nucleotide sequence ID" value="NM_177171.4"/>
</dbReference>
<dbReference type="FunCoup" id="Q5PRF0">
    <property type="interactions" value="3325"/>
</dbReference>
<dbReference type="STRING" id="10090.ENSMUSP00000043115"/>
<dbReference type="iPTMnet" id="Q5PRF0"/>
<dbReference type="PhosphoSitePlus" id="Q5PRF0"/>
<dbReference type="PaxDb" id="10090-ENSMUSP00000043115"/>
<dbReference type="PeptideAtlas" id="Q5PRF0"/>
<dbReference type="ProteomicsDB" id="273348">
    <molecule id="Q5PRF0-1"/>
</dbReference>
<dbReference type="ProteomicsDB" id="273349">
    <molecule id="Q5PRF0-2"/>
</dbReference>
<dbReference type="Pumba" id="Q5PRF0"/>
<dbReference type="Antibodypedia" id="63890">
    <property type="antibodies" value="6 antibodies from 5 providers"/>
</dbReference>
<dbReference type="Ensembl" id="ENSMUST00000040583.7">
    <molecule id="Q5PRF0-1"/>
    <property type="protein sequence ID" value="ENSMUSP00000043115.6"/>
    <property type="gene ID" value="ENSMUSG00000035181.7"/>
</dbReference>
<dbReference type="GeneID" id="320487"/>
<dbReference type="KEGG" id="mmu:320487"/>
<dbReference type="UCSC" id="uc007nna.1">
    <molecule id="Q5PRF0-1"/>
    <property type="organism name" value="mouse"/>
</dbReference>
<dbReference type="UCSC" id="uc007nnc.1">
    <molecule id="Q5PRF0-2"/>
    <property type="organism name" value="mouse"/>
</dbReference>
<dbReference type="AGR" id="MGI:2444133"/>
<dbReference type="CTD" id="25938"/>
<dbReference type="MGI" id="MGI:2444133">
    <property type="gene designation" value="Heatr5a"/>
</dbReference>
<dbReference type="VEuPathDB" id="HostDB:ENSMUSG00000035181"/>
<dbReference type="eggNOG" id="KOG1822">
    <property type="taxonomic scope" value="Eukaryota"/>
</dbReference>
<dbReference type="GeneTree" id="ENSGT00390000006205"/>
<dbReference type="HOGENOM" id="CLU_000652_0_0_1"/>
<dbReference type="InParanoid" id="Q5PRF0"/>
<dbReference type="OMA" id="NQCENAD"/>
<dbReference type="OrthoDB" id="192608at2759"/>
<dbReference type="PhylomeDB" id="Q5PRF0"/>
<dbReference type="TreeFam" id="TF300706"/>
<dbReference type="BioGRID-ORCS" id="320487">
    <property type="hits" value="2 hits in 77 CRISPR screens"/>
</dbReference>
<dbReference type="ChiTaRS" id="Heatr5a">
    <property type="organism name" value="mouse"/>
</dbReference>
<dbReference type="PRO" id="PR:Q5PRF0"/>
<dbReference type="Proteomes" id="UP000000589">
    <property type="component" value="Chromosome 12"/>
</dbReference>
<dbReference type="RNAct" id="Q5PRF0">
    <property type="molecule type" value="protein"/>
</dbReference>
<dbReference type="Bgee" id="ENSMUSG00000035181">
    <property type="expression patterns" value="Expressed in otolith organ and 223 other cell types or tissues"/>
</dbReference>
<dbReference type="ExpressionAtlas" id="Q5PRF0">
    <property type="expression patterns" value="baseline and differential"/>
</dbReference>
<dbReference type="FunFam" id="1.25.10.10:FF:000098">
    <property type="entry name" value="HEAT repeat-containing protein 5A isoform X2"/>
    <property type="match status" value="1"/>
</dbReference>
<dbReference type="FunFam" id="1.25.10.10:FF:000262">
    <property type="entry name" value="HEAT repeat-containing protein 5B"/>
    <property type="match status" value="1"/>
</dbReference>
<dbReference type="Gene3D" id="1.25.10.10">
    <property type="entry name" value="Leucine-rich Repeat Variant"/>
    <property type="match status" value="2"/>
</dbReference>
<dbReference type="InterPro" id="IPR011989">
    <property type="entry name" value="ARM-like"/>
</dbReference>
<dbReference type="InterPro" id="IPR016024">
    <property type="entry name" value="ARM-type_fold"/>
</dbReference>
<dbReference type="InterPro" id="IPR040108">
    <property type="entry name" value="Laa1/Sip1/HEATR5"/>
</dbReference>
<dbReference type="InterPro" id="IPR046837">
    <property type="entry name" value="Laa1/Sip1/HEATR5-like_HEAT"/>
</dbReference>
<dbReference type="PANTHER" id="PTHR21663:SF1">
    <property type="entry name" value="HEAT REPEAT-CONTAINING PROTEIN 5A"/>
    <property type="match status" value="1"/>
</dbReference>
<dbReference type="PANTHER" id="PTHR21663">
    <property type="entry name" value="HYPOTHETICAL HEAT DOMAIN-CONTAINING"/>
    <property type="match status" value="1"/>
</dbReference>
<dbReference type="Pfam" id="PF25468">
    <property type="entry name" value="HEAT_HEATR5A"/>
    <property type="match status" value="1"/>
</dbReference>
<dbReference type="Pfam" id="PF20210">
    <property type="entry name" value="Laa1_Sip1_HTR5"/>
    <property type="match status" value="1"/>
</dbReference>
<dbReference type="SUPFAM" id="SSF48371">
    <property type="entry name" value="ARM repeat"/>
    <property type="match status" value="2"/>
</dbReference>